<feature type="signal peptide" evidence="1 2">
    <location>
        <begin position="1"/>
        <end position="21"/>
    </location>
</feature>
<feature type="chain" id="PRO_0000020108" description="Outer membrane protein P5" evidence="1">
    <location>
        <begin position="22"/>
        <end position="353"/>
    </location>
</feature>
<feature type="transmembrane region" description="Beta stranded" evidence="1">
    <location>
        <begin position="27"/>
        <end position="37"/>
    </location>
</feature>
<feature type="transmembrane region" description="Beta stranded" evidence="1">
    <location>
        <begin position="58"/>
        <end position="69"/>
    </location>
</feature>
<feature type="transmembrane region" description="Beta stranded" evidence="1">
    <location>
        <begin position="77"/>
        <end position="85"/>
    </location>
</feature>
<feature type="transmembrane region" description="Beta stranded" evidence="1">
    <location>
        <begin position="104"/>
        <end position="115"/>
    </location>
</feature>
<feature type="transmembrane region" description="Beta stranded" evidence="1">
    <location>
        <begin position="120"/>
        <end position="128"/>
    </location>
</feature>
<feature type="transmembrane region" description="Beta stranded" evidence="1">
    <location>
        <begin position="158"/>
        <end position="167"/>
    </location>
</feature>
<feature type="transmembrane region" description="Beta stranded" evidence="1">
    <location>
        <begin position="172"/>
        <end position="179"/>
    </location>
</feature>
<feature type="transmembrane region" description="Beta stranded" evidence="1">
    <location>
        <begin position="205"/>
        <end position="213"/>
    </location>
</feature>
<feature type="domain" description="OmpA-like" evidence="1">
    <location>
        <begin position="227"/>
        <end position="353"/>
    </location>
</feature>
<feature type="site" description="Part of salt bridge gating mechanism" evidence="1">
    <location>
        <position position="80"/>
    </location>
</feature>
<feature type="site" description="Part of salt bridge gating mechanism" evidence="1">
    <location>
        <position position="175"/>
    </location>
</feature>
<feature type="disulfide bond" evidence="1">
    <location>
        <begin position="326"/>
        <end position="338"/>
    </location>
</feature>
<reference key="1">
    <citation type="journal article" date="1993" name="Infect. Immun.">
        <title>Molecular cloning and sequence of the gene for outer membrane protein P5 of Haemophilus influenzae.</title>
        <authorList>
            <person name="Munson R.S. Jr."/>
            <person name="Grass S."/>
            <person name="West R."/>
        </authorList>
    </citation>
    <scope>NUCLEOTIDE SEQUENCE [GENOMIC DNA]</scope>
    <scope>PROTEIN SEQUENCE OF 22-34</scope>
    <source>
        <strain>1613 / Serotype B</strain>
    </source>
</reference>
<comment type="function">
    <text evidence="1">With TolR probably plays a role in maintaining the position of the peptidoglycan cell wall in the periplasm. Acts as a porin with low permeability that allows slow penetration of small solutes; an internal gate slows down solute passage.</text>
</comment>
<comment type="subunit">
    <text evidence="1">Monomer and homodimer.</text>
</comment>
<comment type="subcellular location">
    <subcellularLocation>
        <location evidence="1">Cell outer membrane</location>
        <topology evidence="1">Multi-pass membrane protein</topology>
    </subcellularLocation>
</comment>
<comment type="domain">
    <text evidence="1">The extracellular loops are most variable in sequence, and in some bacteria confer sensitivity to phage and/or colicins.</text>
</comment>
<comment type="miscellaneous">
    <text evidence="4">Non-typeable Haemophilus influenzae (NTHi) is a primary pathogen in otitis media (inflammation of the middle ear).</text>
</comment>
<comment type="similarity">
    <text evidence="1">Belongs to the outer membrane OOP (TC 1.B.6) superfamily. OmpA family.</text>
</comment>
<proteinExistence type="evidence at protein level"/>
<evidence type="ECO:0000255" key="1">
    <source>
        <dbReference type="HAMAP-Rule" id="MF_00842"/>
    </source>
</evidence>
<evidence type="ECO:0000269" key="2">
    <source>
    </source>
</evidence>
<evidence type="ECO:0000303" key="3">
    <source>
    </source>
</evidence>
<evidence type="ECO:0000305" key="4"/>
<name>OMP52_HAEIF</name>
<protein>
    <recommendedName>
        <fullName evidence="3">Outer membrane protein P5</fullName>
        <shortName>OMP P5</shortName>
    </recommendedName>
    <alternativeName>
        <fullName evidence="1">Outer membrane porin A</fullName>
    </alternativeName>
    <alternativeName>
        <fullName>Outer membrane protein A</fullName>
    </alternativeName>
</protein>
<keyword id="KW-0998">Cell outer membrane</keyword>
<keyword id="KW-0903">Direct protein sequencing</keyword>
<keyword id="KW-1015">Disulfide bond</keyword>
<keyword id="KW-0406">Ion transport</keyword>
<keyword id="KW-0472">Membrane</keyword>
<keyword id="KW-0626">Porin</keyword>
<keyword id="KW-0732">Signal</keyword>
<keyword id="KW-0812">Transmembrane</keyword>
<keyword id="KW-1134">Transmembrane beta strand</keyword>
<keyword id="KW-0813">Transport</keyword>
<dbReference type="EMBL" id="L20309">
    <property type="protein sequence ID" value="AAA03346.1"/>
    <property type="molecule type" value="Unassigned_DNA"/>
</dbReference>
<dbReference type="RefSeq" id="WP_015702094.1">
    <property type="nucleotide sequence ID" value="NZ_UEXC01000001.1"/>
</dbReference>
<dbReference type="SMR" id="P38368"/>
<dbReference type="GO" id="GO:0009279">
    <property type="term" value="C:cell outer membrane"/>
    <property type="evidence" value="ECO:0007669"/>
    <property type="project" value="UniProtKB-SubCell"/>
</dbReference>
<dbReference type="GO" id="GO:0046930">
    <property type="term" value="C:pore complex"/>
    <property type="evidence" value="ECO:0007669"/>
    <property type="project" value="UniProtKB-KW"/>
</dbReference>
<dbReference type="GO" id="GO:0015288">
    <property type="term" value="F:porin activity"/>
    <property type="evidence" value="ECO:0007669"/>
    <property type="project" value="UniProtKB-UniRule"/>
</dbReference>
<dbReference type="GO" id="GO:0034220">
    <property type="term" value="P:monoatomic ion transmembrane transport"/>
    <property type="evidence" value="ECO:0007669"/>
    <property type="project" value="UniProtKB-UniRule"/>
</dbReference>
<dbReference type="CDD" id="cd07185">
    <property type="entry name" value="OmpA_C-like"/>
    <property type="match status" value="1"/>
</dbReference>
<dbReference type="FunFam" id="3.30.1330.60:FF:000004">
    <property type="entry name" value="Outer membrane protein A"/>
    <property type="match status" value="1"/>
</dbReference>
<dbReference type="Gene3D" id="2.40.160.20">
    <property type="match status" value="1"/>
</dbReference>
<dbReference type="Gene3D" id="3.30.1330.60">
    <property type="entry name" value="OmpA-like domain"/>
    <property type="match status" value="1"/>
</dbReference>
<dbReference type="HAMAP" id="MF_00842">
    <property type="entry name" value="OmpA"/>
    <property type="match status" value="1"/>
</dbReference>
<dbReference type="InterPro" id="IPR050330">
    <property type="entry name" value="Bact_OuterMem_StrucFunc"/>
</dbReference>
<dbReference type="InterPro" id="IPR011250">
    <property type="entry name" value="OMP/PagP_b-brl"/>
</dbReference>
<dbReference type="InterPro" id="IPR006664">
    <property type="entry name" value="OMP_bac"/>
</dbReference>
<dbReference type="InterPro" id="IPR002368">
    <property type="entry name" value="OmpA"/>
</dbReference>
<dbReference type="InterPro" id="IPR006665">
    <property type="entry name" value="OmpA-like"/>
</dbReference>
<dbReference type="InterPro" id="IPR006690">
    <property type="entry name" value="OMPA-like_CS"/>
</dbReference>
<dbReference type="InterPro" id="IPR036737">
    <property type="entry name" value="OmpA-like_sf"/>
</dbReference>
<dbReference type="InterPro" id="IPR000498">
    <property type="entry name" value="OmpA-like_TM_dom"/>
</dbReference>
<dbReference type="NCBIfam" id="NF008071">
    <property type="entry name" value="PRK10808.1"/>
    <property type="match status" value="1"/>
</dbReference>
<dbReference type="PANTHER" id="PTHR30329:SF21">
    <property type="entry name" value="LIPOPROTEIN YIAD-RELATED"/>
    <property type="match status" value="1"/>
</dbReference>
<dbReference type="PANTHER" id="PTHR30329">
    <property type="entry name" value="STATOR ELEMENT OF FLAGELLAR MOTOR COMPLEX"/>
    <property type="match status" value="1"/>
</dbReference>
<dbReference type="Pfam" id="PF00691">
    <property type="entry name" value="OmpA"/>
    <property type="match status" value="1"/>
</dbReference>
<dbReference type="Pfam" id="PF01389">
    <property type="entry name" value="OmpA_membrane"/>
    <property type="match status" value="1"/>
</dbReference>
<dbReference type="PRINTS" id="PR01021">
    <property type="entry name" value="OMPADOMAIN"/>
</dbReference>
<dbReference type="PRINTS" id="PR01022">
    <property type="entry name" value="OUTRMMBRANEA"/>
</dbReference>
<dbReference type="SUPFAM" id="SSF56925">
    <property type="entry name" value="OMPA-like"/>
    <property type="match status" value="1"/>
</dbReference>
<dbReference type="SUPFAM" id="SSF103088">
    <property type="entry name" value="OmpA-like"/>
    <property type="match status" value="1"/>
</dbReference>
<dbReference type="PROSITE" id="PS01068">
    <property type="entry name" value="OMPA_1"/>
    <property type="match status" value="1"/>
</dbReference>
<dbReference type="PROSITE" id="PS51123">
    <property type="entry name" value="OMPA_2"/>
    <property type="match status" value="1"/>
</dbReference>
<gene>
    <name evidence="1" type="primary">ompA</name>
    <name evidence="3" type="synonym">ompP5</name>
</gene>
<sequence>MKKTAIALVVAGLAAASVAQAAPQENTFYAGVKAGQASFHDGLRALAREKNVGYHRNSFTYGVFGGYQILNQNNLGLAVELGYDDFGRAKGREKGKTVAKHTNHGAHLSLKGSYEVLDGLDVYGKAGVALVRSDYKFYEDANGTRDHKKGRHTARASGLFAVGAEYAVLPELAVRLEYQWLTRVGKYRPQDKPNTAINYNPWIGSINAGISYRFGQGAAPVVAAPEVVSKTFSLNSDVTFAFGKANLKPQAQATLDSIYGEMSQVKSAKVAVAGYTDRIGSDAFNVKLSQERADSVANYFVAKGVAADAISATGYGKANPVTGATCDQVKGRKALIACLAPDRRVEIAVNGTK</sequence>
<organism>
    <name type="scientific">Haemophilus influenzae</name>
    <dbReference type="NCBI Taxonomy" id="727"/>
    <lineage>
        <taxon>Bacteria</taxon>
        <taxon>Pseudomonadati</taxon>
        <taxon>Pseudomonadota</taxon>
        <taxon>Gammaproteobacteria</taxon>
        <taxon>Pasteurellales</taxon>
        <taxon>Pasteurellaceae</taxon>
        <taxon>Haemophilus</taxon>
    </lineage>
</organism>
<accession>P38368</accession>